<reference key="1">
    <citation type="journal article" date="2007" name="Genome Biol.">
        <title>Characterization and modeling of the Haemophilus influenzae core and supragenomes based on the complete genomic sequences of Rd and 12 clinical nontypeable strains.</title>
        <authorList>
            <person name="Hogg J.S."/>
            <person name="Hu F.Z."/>
            <person name="Janto B."/>
            <person name="Boissy R."/>
            <person name="Hayes J."/>
            <person name="Keefe R."/>
            <person name="Post J.C."/>
            <person name="Ehrlich G.D."/>
        </authorList>
    </citation>
    <scope>NUCLEOTIDE SEQUENCE [LARGE SCALE GENOMIC DNA]</scope>
    <source>
        <strain>PittGG</strain>
    </source>
</reference>
<accession>A5UG09</accession>
<feature type="chain" id="PRO_1000022976" description="Shikimate kinase">
    <location>
        <begin position="1"/>
        <end position="180"/>
    </location>
</feature>
<feature type="binding site" evidence="1">
    <location>
        <begin position="14"/>
        <end position="19"/>
    </location>
    <ligand>
        <name>ATP</name>
        <dbReference type="ChEBI" id="CHEBI:30616"/>
    </ligand>
</feature>
<feature type="binding site" evidence="1">
    <location>
        <position position="18"/>
    </location>
    <ligand>
        <name>Mg(2+)</name>
        <dbReference type="ChEBI" id="CHEBI:18420"/>
    </ligand>
</feature>
<feature type="binding site" evidence="1">
    <location>
        <position position="36"/>
    </location>
    <ligand>
        <name>substrate</name>
    </ligand>
</feature>
<feature type="binding site" evidence="1">
    <location>
        <position position="60"/>
    </location>
    <ligand>
        <name>substrate</name>
    </ligand>
</feature>
<feature type="binding site" evidence="1">
    <location>
        <position position="82"/>
    </location>
    <ligand>
        <name>substrate</name>
    </ligand>
</feature>
<feature type="binding site" evidence="1">
    <location>
        <position position="120"/>
    </location>
    <ligand>
        <name>ATP</name>
        <dbReference type="ChEBI" id="CHEBI:30616"/>
    </ligand>
</feature>
<feature type="binding site" evidence="1">
    <location>
        <position position="140"/>
    </location>
    <ligand>
        <name>substrate</name>
    </ligand>
</feature>
<feature type="binding site" evidence="1">
    <location>
        <position position="157"/>
    </location>
    <ligand>
        <name>ATP</name>
        <dbReference type="ChEBI" id="CHEBI:30616"/>
    </ligand>
</feature>
<gene>
    <name evidence="1" type="primary">aroK</name>
    <name type="ordered locus">CGSHiGG_03650</name>
</gene>
<sequence length="180" mass="20292">MAEKRNIFLVGPMGAGKSTIGRQLAQQLNMDFIDSDAVIEERTGADISWIFDLEGEDGFRKREERIINELTQMQGIVLSTGGGAVLSKENRNYLSARGIVIYLETTVEKQFQRTQRDKKRPLLQDAENPRQVLEDLAKIRNPLYEEIADITLPTDEQNAKIMVNQIVDLIDNMNGLNGAL</sequence>
<protein>
    <recommendedName>
        <fullName evidence="1">Shikimate kinase</fullName>
        <shortName evidence="1">SK</shortName>
        <ecNumber evidence="1">2.7.1.71</ecNumber>
    </recommendedName>
</protein>
<organism>
    <name type="scientific">Haemophilus influenzae (strain PittGG)</name>
    <dbReference type="NCBI Taxonomy" id="374931"/>
    <lineage>
        <taxon>Bacteria</taxon>
        <taxon>Pseudomonadati</taxon>
        <taxon>Pseudomonadota</taxon>
        <taxon>Gammaproteobacteria</taxon>
        <taxon>Pasteurellales</taxon>
        <taxon>Pasteurellaceae</taxon>
        <taxon>Haemophilus</taxon>
    </lineage>
</organism>
<comment type="function">
    <text evidence="1">Catalyzes the specific phosphorylation of the 3-hydroxyl group of shikimic acid using ATP as a cosubstrate.</text>
</comment>
<comment type="catalytic activity">
    <reaction evidence="1">
        <text>shikimate + ATP = 3-phosphoshikimate + ADP + H(+)</text>
        <dbReference type="Rhea" id="RHEA:13121"/>
        <dbReference type="ChEBI" id="CHEBI:15378"/>
        <dbReference type="ChEBI" id="CHEBI:30616"/>
        <dbReference type="ChEBI" id="CHEBI:36208"/>
        <dbReference type="ChEBI" id="CHEBI:145989"/>
        <dbReference type="ChEBI" id="CHEBI:456216"/>
        <dbReference type="EC" id="2.7.1.71"/>
    </reaction>
</comment>
<comment type="cofactor">
    <cofactor evidence="1">
        <name>Mg(2+)</name>
        <dbReference type="ChEBI" id="CHEBI:18420"/>
    </cofactor>
    <text evidence="1">Binds 1 Mg(2+) ion per subunit.</text>
</comment>
<comment type="pathway">
    <text evidence="1">Metabolic intermediate biosynthesis; chorismate biosynthesis; chorismate from D-erythrose 4-phosphate and phosphoenolpyruvate: step 5/7.</text>
</comment>
<comment type="subunit">
    <text evidence="1">Monomer.</text>
</comment>
<comment type="subcellular location">
    <subcellularLocation>
        <location evidence="1">Cytoplasm</location>
    </subcellularLocation>
</comment>
<comment type="similarity">
    <text evidence="1">Belongs to the shikimate kinase family.</text>
</comment>
<keyword id="KW-0028">Amino-acid biosynthesis</keyword>
<keyword id="KW-0057">Aromatic amino acid biosynthesis</keyword>
<keyword id="KW-0067">ATP-binding</keyword>
<keyword id="KW-0963">Cytoplasm</keyword>
<keyword id="KW-0418">Kinase</keyword>
<keyword id="KW-0460">Magnesium</keyword>
<keyword id="KW-0479">Metal-binding</keyword>
<keyword id="KW-0547">Nucleotide-binding</keyword>
<keyword id="KW-0808">Transferase</keyword>
<proteinExistence type="inferred from homology"/>
<dbReference type="EC" id="2.7.1.71" evidence="1"/>
<dbReference type="EMBL" id="CP000672">
    <property type="protein sequence ID" value="ABQ99714.1"/>
    <property type="molecule type" value="Genomic_DNA"/>
</dbReference>
<dbReference type="SMR" id="A5UG09"/>
<dbReference type="KEGG" id="hiq:CGSHiGG_03650"/>
<dbReference type="HOGENOM" id="CLU_057607_2_2_6"/>
<dbReference type="UniPathway" id="UPA00053">
    <property type="reaction ID" value="UER00088"/>
</dbReference>
<dbReference type="Proteomes" id="UP000001990">
    <property type="component" value="Chromosome"/>
</dbReference>
<dbReference type="GO" id="GO:0005829">
    <property type="term" value="C:cytosol"/>
    <property type="evidence" value="ECO:0007669"/>
    <property type="project" value="TreeGrafter"/>
</dbReference>
<dbReference type="GO" id="GO:0005524">
    <property type="term" value="F:ATP binding"/>
    <property type="evidence" value="ECO:0007669"/>
    <property type="project" value="UniProtKB-UniRule"/>
</dbReference>
<dbReference type="GO" id="GO:0000287">
    <property type="term" value="F:magnesium ion binding"/>
    <property type="evidence" value="ECO:0007669"/>
    <property type="project" value="UniProtKB-UniRule"/>
</dbReference>
<dbReference type="GO" id="GO:0004765">
    <property type="term" value="F:shikimate kinase activity"/>
    <property type="evidence" value="ECO:0007669"/>
    <property type="project" value="UniProtKB-UniRule"/>
</dbReference>
<dbReference type="GO" id="GO:0008652">
    <property type="term" value="P:amino acid biosynthetic process"/>
    <property type="evidence" value="ECO:0007669"/>
    <property type="project" value="UniProtKB-KW"/>
</dbReference>
<dbReference type="GO" id="GO:0009073">
    <property type="term" value="P:aromatic amino acid family biosynthetic process"/>
    <property type="evidence" value="ECO:0007669"/>
    <property type="project" value="UniProtKB-KW"/>
</dbReference>
<dbReference type="GO" id="GO:0009423">
    <property type="term" value="P:chorismate biosynthetic process"/>
    <property type="evidence" value="ECO:0007669"/>
    <property type="project" value="UniProtKB-UniRule"/>
</dbReference>
<dbReference type="CDD" id="cd00464">
    <property type="entry name" value="SK"/>
    <property type="match status" value="1"/>
</dbReference>
<dbReference type="FunFam" id="3.40.50.300:FF:000099">
    <property type="entry name" value="Shikimate kinase 1"/>
    <property type="match status" value="1"/>
</dbReference>
<dbReference type="Gene3D" id="3.40.50.300">
    <property type="entry name" value="P-loop containing nucleotide triphosphate hydrolases"/>
    <property type="match status" value="1"/>
</dbReference>
<dbReference type="HAMAP" id="MF_00109">
    <property type="entry name" value="Shikimate_kinase"/>
    <property type="match status" value="1"/>
</dbReference>
<dbReference type="InterPro" id="IPR027417">
    <property type="entry name" value="P-loop_NTPase"/>
</dbReference>
<dbReference type="InterPro" id="IPR031322">
    <property type="entry name" value="Shikimate/glucono_kinase"/>
</dbReference>
<dbReference type="InterPro" id="IPR000623">
    <property type="entry name" value="Shikimate_kinase/TSH1"/>
</dbReference>
<dbReference type="InterPro" id="IPR023000">
    <property type="entry name" value="Shikimate_kinase_CS"/>
</dbReference>
<dbReference type="NCBIfam" id="NF003456">
    <property type="entry name" value="PRK05057.1"/>
    <property type="match status" value="1"/>
</dbReference>
<dbReference type="PANTHER" id="PTHR21087">
    <property type="entry name" value="SHIKIMATE KINASE"/>
    <property type="match status" value="1"/>
</dbReference>
<dbReference type="PANTHER" id="PTHR21087:SF16">
    <property type="entry name" value="SHIKIMATE KINASE 1, CHLOROPLASTIC"/>
    <property type="match status" value="1"/>
</dbReference>
<dbReference type="Pfam" id="PF01202">
    <property type="entry name" value="SKI"/>
    <property type="match status" value="1"/>
</dbReference>
<dbReference type="PRINTS" id="PR01100">
    <property type="entry name" value="SHIKIMTKNASE"/>
</dbReference>
<dbReference type="SUPFAM" id="SSF52540">
    <property type="entry name" value="P-loop containing nucleoside triphosphate hydrolases"/>
    <property type="match status" value="1"/>
</dbReference>
<dbReference type="PROSITE" id="PS01128">
    <property type="entry name" value="SHIKIMATE_KINASE"/>
    <property type="match status" value="1"/>
</dbReference>
<name>AROK_HAEIG</name>
<evidence type="ECO:0000255" key="1">
    <source>
        <dbReference type="HAMAP-Rule" id="MF_00109"/>
    </source>
</evidence>